<dbReference type="EMBL" id="BD168686">
    <property type="status" value="NOT_ANNOTATED_CDS"/>
    <property type="molecule type" value="mRNA"/>
</dbReference>
<dbReference type="EMBL" id="AL355316">
    <property type="status" value="NOT_ANNOTATED_CDS"/>
    <property type="molecule type" value="Genomic_DNA"/>
</dbReference>
<dbReference type="EMBL" id="BC148465">
    <property type="protein sequence ID" value="AAI48466.1"/>
    <property type="molecule type" value="mRNA"/>
</dbReference>
<dbReference type="EMBL" id="BC156665">
    <property type="protein sequence ID" value="AAI56666.1"/>
    <property type="molecule type" value="mRNA"/>
</dbReference>
<dbReference type="CCDS" id="CCDS41577.1"/>
<dbReference type="RefSeq" id="NP_001025184.1">
    <property type="nucleotide sequence ID" value="NM_001030013.2"/>
</dbReference>
<dbReference type="FunCoup" id="P0C0P6">
    <property type="interactions" value="390"/>
</dbReference>
<dbReference type="IntAct" id="P0C0P6">
    <property type="interactions" value="1"/>
</dbReference>
<dbReference type="STRING" id="9606.ENSP00000381105"/>
<dbReference type="ChEMBL" id="CHEMBL3596086"/>
<dbReference type="BioMuta" id="NPS"/>
<dbReference type="jPOST" id="P0C0P6"/>
<dbReference type="PaxDb" id="9606-ENSP00000381105"/>
<dbReference type="PeptideAtlas" id="P0C0P6"/>
<dbReference type="Antibodypedia" id="57702">
    <property type="antibodies" value="128 antibodies from 18 providers"/>
</dbReference>
<dbReference type="DNASU" id="594857"/>
<dbReference type="Ensembl" id="ENST00000398023.3">
    <property type="protein sequence ID" value="ENSP00000381105.2"/>
    <property type="gene ID" value="ENSG00000214285.3"/>
</dbReference>
<dbReference type="GeneID" id="594857"/>
<dbReference type="KEGG" id="hsa:594857"/>
<dbReference type="MANE-Select" id="ENST00000398023.3">
    <property type="protein sequence ID" value="ENSP00000381105.2"/>
    <property type="RefSeq nucleotide sequence ID" value="NM_001030013.2"/>
    <property type="RefSeq protein sequence ID" value="NP_001025184.1"/>
</dbReference>
<dbReference type="UCSC" id="uc001ljx.2">
    <property type="organism name" value="human"/>
</dbReference>
<dbReference type="AGR" id="HGNC:33940"/>
<dbReference type="CTD" id="594857"/>
<dbReference type="DisGeNET" id="594857"/>
<dbReference type="GeneCards" id="NPS"/>
<dbReference type="HGNC" id="HGNC:33940">
    <property type="gene designation" value="NPS"/>
</dbReference>
<dbReference type="HPA" id="ENSG00000214285">
    <property type="expression patterns" value="Not detected"/>
</dbReference>
<dbReference type="MIM" id="609513">
    <property type="type" value="gene"/>
</dbReference>
<dbReference type="neXtProt" id="NX_P0C0P6"/>
<dbReference type="OpenTargets" id="ENSG00000214285"/>
<dbReference type="PharmGKB" id="PA162398160"/>
<dbReference type="VEuPathDB" id="HostDB:ENSG00000214285"/>
<dbReference type="eggNOG" id="ENOG502SSTA">
    <property type="taxonomic scope" value="Eukaryota"/>
</dbReference>
<dbReference type="GeneTree" id="ENSGT00400000024769"/>
<dbReference type="HOGENOM" id="CLU_2432613_0_0_1"/>
<dbReference type="InParanoid" id="P0C0P6"/>
<dbReference type="OMA" id="MFVCSGY"/>
<dbReference type="OrthoDB" id="9877592at2759"/>
<dbReference type="PAN-GO" id="P0C0P6">
    <property type="GO annotations" value="3 GO annotations based on evolutionary models"/>
</dbReference>
<dbReference type="PhylomeDB" id="P0C0P6"/>
<dbReference type="PathwayCommons" id="P0C0P6"/>
<dbReference type="Reactome" id="R-HSA-375276">
    <property type="pathway name" value="Peptide ligand-binding receptors"/>
</dbReference>
<dbReference type="Reactome" id="R-HSA-416476">
    <property type="pathway name" value="G alpha (q) signalling events"/>
</dbReference>
<dbReference type="Reactome" id="R-HSA-418555">
    <property type="pathway name" value="G alpha (s) signalling events"/>
</dbReference>
<dbReference type="SignaLink" id="P0C0P6"/>
<dbReference type="BioGRID-ORCS" id="594857">
    <property type="hits" value="11 hits in 1067 CRISPR screens"/>
</dbReference>
<dbReference type="GeneWiki" id="Neuropeptide_S"/>
<dbReference type="GenomeRNAi" id="594857"/>
<dbReference type="Pharos" id="P0C0P6">
    <property type="development level" value="Tbio"/>
</dbReference>
<dbReference type="PRO" id="PR:P0C0P6"/>
<dbReference type="Proteomes" id="UP000005640">
    <property type="component" value="Chromosome 10"/>
</dbReference>
<dbReference type="RNAct" id="P0C0P6">
    <property type="molecule type" value="protein"/>
</dbReference>
<dbReference type="Bgee" id="ENSG00000214285">
    <property type="expression patterns" value="Expressed in male germ line stem cell (sensu Vertebrata) in testis and 6 other cell types or tissues"/>
</dbReference>
<dbReference type="GO" id="GO:0005576">
    <property type="term" value="C:extracellular region"/>
    <property type="evidence" value="ECO:0000304"/>
    <property type="project" value="Reactome"/>
</dbReference>
<dbReference type="GO" id="GO:0045202">
    <property type="term" value="C:synapse"/>
    <property type="evidence" value="ECO:0007669"/>
    <property type="project" value="GOC"/>
</dbReference>
<dbReference type="GO" id="GO:0007218">
    <property type="term" value="P:neuropeptide signaling pathway"/>
    <property type="evidence" value="ECO:0007669"/>
    <property type="project" value="UniProtKB-KW"/>
</dbReference>
<dbReference type="GO" id="GO:0045760">
    <property type="term" value="P:positive regulation of action potential"/>
    <property type="evidence" value="ECO:0000318"/>
    <property type="project" value="GO_Central"/>
</dbReference>
<dbReference type="GO" id="GO:0010841">
    <property type="term" value="P:positive regulation of circadian sleep/wake cycle, wakefulness"/>
    <property type="evidence" value="ECO:0007669"/>
    <property type="project" value="Ensembl"/>
</dbReference>
<dbReference type="GO" id="GO:0032230">
    <property type="term" value="P:positive regulation of synaptic transmission, GABAergic"/>
    <property type="evidence" value="ECO:0000318"/>
    <property type="project" value="GO_Central"/>
</dbReference>
<dbReference type="GO" id="GO:0051968">
    <property type="term" value="P:positive regulation of synaptic transmission, glutamatergic"/>
    <property type="evidence" value="ECO:0000318"/>
    <property type="project" value="GO_Central"/>
</dbReference>
<dbReference type="GO" id="GO:0035249">
    <property type="term" value="P:synaptic transmission, glutamatergic"/>
    <property type="evidence" value="ECO:0007669"/>
    <property type="project" value="Ensembl"/>
</dbReference>
<dbReference type="GO" id="GO:0008542">
    <property type="term" value="P:visual learning"/>
    <property type="evidence" value="ECO:0007669"/>
    <property type="project" value="Ensembl"/>
</dbReference>
<dbReference type="InterPro" id="IPR028138">
    <property type="entry name" value="Neuropeptide_S"/>
</dbReference>
<dbReference type="PANTHER" id="PTHR36679">
    <property type="entry name" value="NEUROPEPTIDE S"/>
    <property type="match status" value="1"/>
</dbReference>
<dbReference type="PANTHER" id="PTHR36679:SF1">
    <property type="entry name" value="NEUROPEPTIDE S"/>
    <property type="match status" value="1"/>
</dbReference>
<dbReference type="Pfam" id="PF14993">
    <property type="entry name" value="Neuropeptide_S"/>
    <property type="match status" value="1"/>
</dbReference>
<sequence>MISSVKLNLILVLSLSTMHVFWCYPVPSSKVSGKSDYFLILLNSCPTRLDRSKELAFLKPILEKMFVKRSFRNGVGTGMKKTSFQRAKS</sequence>
<name>NPS_HUMAN</name>
<organism>
    <name type="scientific">Homo sapiens</name>
    <name type="common">Human</name>
    <dbReference type="NCBI Taxonomy" id="9606"/>
    <lineage>
        <taxon>Eukaryota</taxon>
        <taxon>Metazoa</taxon>
        <taxon>Chordata</taxon>
        <taxon>Craniata</taxon>
        <taxon>Vertebrata</taxon>
        <taxon>Euteleostomi</taxon>
        <taxon>Mammalia</taxon>
        <taxon>Eutheria</taxon>
        <taxon>Euarchontoglires</taxon>
        <taxon>Primates</taxon>
        <taxon>Haplorrhini</taxon>
        <taxon>Catarrhini</taxon>
        <taxon>Hominidae</taxon>
        <taxon>Homo</taxon>
    </lineage>
</organism>
<evidence type="ECO:0000250" key="1"/>
<evidence type="ECO:0000255" key="2"/>
<evidence type="ECO:0000269" key="3">
    <source>
    </source>
</evidence>
<evidence type="ECO:0000269" key="4">
    <source>
    </source>
</evidence>
<reference key="1">
    <citation type="patent" date="2002-04-18" number="WO0231145">
        <title>Novel G protein-coupled receptor protein and its DNA.</title>
        <authorList>
            <person name="Sato S."/>
            <person name="Shintani Y."/>
            <person name="Miyajima N."/>
            <person name="Yoshimura K."/>
        </authorList>
    </citation>
    <scope>NUCLEOTIDE SEQUENCE [MRNA]</scope>
</reference>
<reference key="2">
    <citation type="journal article" date="2004" name="Nature">
        <title>The DNA sequence and comparative analysis of human chromosome 10.</title>
        <authorList>
            <person name="Deloukas P."/>
            <person name="Earthrowl M.E."/>
            <person name="Grafham D.V."/>
            <person name="Rubenfield M."/>
            <person name="French L."/>
            <person name="Steward C.A."/>
            <person name="Sims S.K."/>
            <person name="Jones M.C."/>
            <person name="Searle S."/>
            <person name="Scott C."/>
            <person name="Howe K."/>
            <person name="Hunt S.E."/>
            <person name="Andrews T.D."/>
            <person name="Gilbert J.G.R."/>
            <person name="Swarbreck D."/>
            <person name="Ashurst J.L."/>
            <person name="Taylor A."/>
            <person name="Battles J."/>
            <person name="Bird C.P."/>
            <person name="Ainscough R."/>
            <person name="Almeida J.P."/>
            <person name="Ashwell R.I.S."/>
            <person name="Ambrose K.D."/>
            <person name="Babbage A.K."/>
            <person name="Bagguley C.L."/>
            <person name="Bailey J."/>
            <person name="Banerjee R."/>
            <person name="Bates K."/>
            <person name="Beasley H."/>
            <person name="Bray-Allen S."/>
            <person name="Brown A.J."/>
            <person name="Brown J.Y."/>
            <person name="Burford D.C."/>
            <person name="Burrill W."/>
            <person name="Burton J."/>
            <person name="Cahill P."/>
            <person name="Camire D."/>
            <person name="Carter N.P."/>
            <person name="Chapman J.C."/>
            <person name="Clark S.Y."/>
            <person name="Clarke G."/>
            <person name="Clee C.M."/>
            <person name="Clegg S."/>
            <person name="Corby N."/>
            <person name="Coulson A."/>
            <person name="Dhami P."/>
            <person name="Dutta I."/>
            <person name="Dunn M."/>
            <person name="Faulkner L."/>
            <person name="Frankish A."/>
            <person name="Frankland J.A."/>
            <person name="Garner P."/>
            <person name="Garnett J."/>
            <person name="Gribble S."/>
            <person name="Griffiths C."/>
            <person name="Grocock R."/>
            <person name="Gustafson E."/>
            <person name="Hammond S."/>
            <person name="Harley J.L."/>
            <person name="Hart E."/>
            <person name="Heath P.D."/>
            <person name="Ho T.P."/>
            <person name="Hopkins B."/>
            <person name="Horne J."/>
            <person name="Howden P.J."/>
            <person name="Huckle E."/>
            <person name="Hynds C."/>
            <person name="Johnson C."/>
            <person name="Johnson D."/>
            <person name="Kana A."/>
            <person name="Kay M."/>
            <person name="Kimberley A.M."/>
            <person name="Kershaw J.K."/>
            <person name="Kokkinaki M."/>
            <person name="Laird G.K."/>
            <person name="Lawlor S."/>
            <person name="Lee H.M."/>
            <person name="Leongamornlert D.A."/>
            <person name="Laird G."/>
            <person name="Lloyd C."/>
            <person name="Lloyd D.M."/>
            <person name="Loveland J."/>
            <person name="Lovell J."/>
            <person name="McLaren S."/>
            <person name="McLay K.E."/>
            <person name="McMurray A."/>
            <person name="Mashreghi-Mohammadi M."/>
            <person name="Matthews L."/>
            <person name="Milne S."/>
            <person name="Nickerson T."/>
            <person name="Nguyen M."/>
            <person name="Overton-Larty E."/>
            <person name="Palmer S.A."/>
            <person name="Pearce A.V."/>
            <person name="Peck A.I."/>
            <person name="Pelan S."/>
            <person name="Phillimore B."/>
            <person name="Porter K."/>
            <person name="Rice C.M."/>
            <person name="Rogosin A."/>
            <person name="Ross M.T."/>
            <person name="Sarafidou T."/>
            <person name="Sehra H.K."/>
            <person name="Shownkeen R."/>
            <person name="Skuce C.D."/>
            <person name="Smith M."/>
            <person name="Standring L."/>
            <person name="Sycamore N."/>
            <person name="Tester J."/>
            <person name="Thorpe A."/>
            <person name="Torcasso W."/>
            <person name="Tracey A."/>
            <person name="Tromans A."/>
            <person name="Tsolas J."/>
            <person name="Wall M."/>
            <person name="Walsh J."/>
            <person name="Wang H."/>
            <person name="Weinstock K."/>
            <person name="West A.P."/>
            <person name="Willey D.L."/>
            <person name="Whitehead S.L."/>
            <person name="Wilming L."/>
            <person name="Wray P.W."/>
            <person name="Young L."/>
            <person name="Chen Y."/>
            <person name="Lovering R.C."/>
            <person name="Moschonas N.K."/>
            <person name="Siebert R."/>
            <person name="Fechtel K."/>
            <person name="Bentley D."/>
            <person name="Durbin R.M."/>
            <person name="Hubbard T."/>
            <person name="Doucette-Stamm L."/>
            <person name="Beck S."/>
            <person name="Smith D.R."/>
            <person name="Rogers J."/>
        </authorList>
    </citation>
    <scope>NUCLEOTIDE SEQUENCE [LARGE SCALE GENOMIC DNA]</scope>
</reference>
<reference key="3">
    <citation type="journal article" date="2004" name="Genome Res.">
        <title>The status, quality, and expansion of the NIH full-length cDNA project: the Mammalian Gene Collection (MGC).</title>
        <authorList>
            <consortium name="The MGC Project Team"/>
        </authorList>
    </citation>
    <scope>NUCLEOTIDE SEQUENCE [LARGE SCALE MRNA]</scope>
    <source>
        <tissue>Placenta</tissue>
    </source>
</reference>
<reference key="4">
    <citation type="journal article" date="2004" name="Neuron">
        <title>Neuropeptide S: a neuropeptide promoting arousal and anxiolytic-like effects.</title>
        <authorList>
            <person name="Xu Y.-L."/>
            <person name="Reinscheid R.K."/>
            <person name="Huitron-Resendiz S."/>
            <person name="Clark S.D."/>
            <person name="Wang Z."/>
            <person name="Lin S.H."/>
            <person name="Brucher F.A."/>
            <person name="Zeng J."/>
            <person name="Ly N.K."/>
            <person name="Henriksen S.J."/>
            <person name="de Lecea L."/>
            <person name="Civelli O."/>
        </authorList>
    </citation>
    <scope>FUNCTION</scope>
</reference>
<reference key="5">
    <citation type="journal article" date="2006" name="J. Biol. Chem.">
        <title>Structure-function relationships in the neuropeptide S receptor: molecular consequences of the asthma-associated mutation N107I.</title>
        <authorList>
            <person name="Bernier V."/>
            <person name="Stocco R."/>
            <person name="Bogusky M.J."/>
            <person name="Joyce J.G."/>
            <person name="Parachoniak C."/>
            <person name="Grenier K."/>
            <person name="Arget M."/>
            <person name="Mathieu M.C."/>
            <person name="O'Neill G.P."/>
            <person name="Slipetz D."/>
            <person name="Crackower M.A."/>
            <person name="Tan C.M."/>
            <person name="Therien A.G."/>
        </authorList>
    </citation>
    <scope>FUNCTION</scope>
</reference>
<proteinExistence type="inferred from homology"/>
<keyword id="KW-0165">Cleavage on pair of basic residues</keyword>
<keyword id="KW-0527">Neuropeptide</keyword>
<keyword id="KW-1185">Reference proteome</keyword>
<keyword id="KW-0964">Secreted</keyword>
<keyword id="KW-0732">Signal</keyword>
<protein>
    <recommendedName>
        <fullName>Neuropeptide S</fullName>
    </recommendedName>
</protein>
<comment type="function">
    <text evidence="1 3 4">Modulates arousal and anxiety. May play an important anorexigenic role (By similarity). Binds to its receptor NPSR1 with nanomolar affinity to increase intracellular calcium concentrations (PubMed:15312648, PubMed:16790440).</text>
</comment>
<comment type="subcellular location">
    <subcellularLocation>
        <location>Secreted</location>
    </subcellularLocation>
</comment>
<gene>
    <name type="primary">NPS</name>
</gene>
<accession>P0C0P6</accession>
<feature type="signal peptide" evidence="2">
    <location>
        <begin position="1"/>
        <end position="23"/>
    </location>
</feature>
<feature type="propeptide" id="PRO_0000042888">
    <location>
        <begin position="24"/>
        <end position="67"/>
    </location>
</feature>
<feature type="peptide" id="PRO_0000042889" description="Neuropeptide S">
    <location>
        <begin position="70"/>
        <end position="89"/>
    </location>
</feature>
<feature type="sequence variant" id="VAR_051239" description="In dbSNP:rs990310.">
    <original>S</original>
    <variation>L</variation>
    <location>
        <position position="14"/>
    </location>
</feature>
<feature type="sequence variant" id="VAR_051240" description="In dbSNP:rs4751440.">
    <original>V</original>
    <variation>L</variation>
    <location>
        <position position="75"/>
    </location>
</feature>